<keyword id="KW-0067">ATP-binding</keyword>
<keyword id="KW-0963">Cytoplasm</keyword>
<keyword id="KW-0235">DNA replication</keyword>
<keyword id="KW-0238">DNA-binding</keyword>
<keyword id="KW-0446">Lipid-binding</keyword>
<keyword id="KW-0547">Nucleotide-binding</keyword>
<reference key="1">
    <citation type="journal article" date="2006" name="Proc. Natl. Acad. Sci. U.S.A.">
        <title>The complete genome sequence of a chronic atrophic gastritis Helicobacter pylori strain: evolution during disease progression.</title>
        <authorList>
            <person name="Oh J.D."/>
            <person name="Kling-Baeckhed H."/>
            <person name="Giannakis M."/>
            <person name="Xu J."/>
            <person name="Fulton R.S."/>
            <person name="Fulton L.A."/>
            <person name="Cordum H.S."/>
            <person name="Wang C."/>
            <person name="Elliott G."/>
            <person name="Edwards J."/>
            <person name="Mardis E.R."/>
            <person name="Engstrand L.G."/>
            <person name="Gordon J.I."/>
        </authorList>
    </citation>
    <scope>NUCLEOTIDE SEQUENCE [LARGE SCALE GENOMIC DNA]</scope>
    <source>
        <strain>HPAG1</strain>
    </source>
</reference>
<gene>
    <name evidence="1" type="primary">dnaA</name>
    <name type="ordered locus">HPAG1_1387</name>
</gene>
<comment type="function">
    <text evidence="1">Plays an essential role in the initiation and regulation of chromosomal replication. ATP-DnaA binds to the origin of replication (oriC) to initiate formation of the DNA replication initiation complex once per cell cycle. Binds the DnaA box (a 9 base pair repeat at the origin) and separates the double-stranded (ds)DNA. Forms a right-handed helical filament on oriC DNA; dsDNA binds to the exterior of the filament while single-stranded (ss)DNA is stabiized in the filament's interior. The ATP-DnaA-oriC complex binds and stabilizes one strand of the AT-rich DNA unwinding element (DUE), permitting loading of DNA polymerase. After initiation quickly degrades to an ADP-DnaA complex that is not apt for DNA replication. Binds acidic phospholipids.</text>
</comment>
<comment type="subunit">
    <text evidence="1">Oligomerizes as a right-handed, spiral filament on DNA at oriC.</text>
</comment>
<comment type="subcellular location">
    <subcellularLocation>
        <location evidence="1">Cytoplasm</location>
    </subcellularLocation>
</comment>
<comment type="domain">
    <text evidence="1">Domain I is involved in oligomerization and binding regulators, domain II is flexibile and of varying length in different bacteria, domain III forms the AAA+ region, while domain IV binds dsDNA.</text>
</comment>
<comment type="similarity">
    <text evidence="1">Belongs to the DnaA family.</text>
</comment>
<protein>
    <recommendedName>
        <fullName evidence="1">Chromosomal replication initiator protein DnaA</fullName>
    </recommendedName>
</protein>
<sequence>MDTNNNIEKEILALAKQKVSPIEYENCLSQLKYNPNASKSDIAFFYAPNTLLCNWITAKYGTLLKEILSQNKVGMHLAHSVDVRIEVAPKIQISTQSNINYKATKMSVKDSYTFENFVVGSCNNTVYEIAKKVAQSDTPPYNPVLFYGGTGLGKTHILNAIGNHALEKHKKVVLVTSEDFLTDFLKHLDNKTMDSFKAKYRHCDFFLLDDAQFLQGKPKLEEEFFHTFNELHANSKQIVLISDRSPKNIAGLEDRLKSRFEWGITAKVMPPDLETKLSIVKQKCQLNQIILPEEVMEYIAQHISDNIRQMEGAIIKISVNANLMNASIDLNLAKTVLEDLQKDHAEGSSLENILLAVAQSLNLKSSEIKVSSRQKNVALARKLVVYFARLYTPNPTLSLAQFLDLKDHSSISKMYSSVKKMLEEEKSPFILSLREEIKNRLNELNDKKTAFNSSE</sequence>
<organism>
    <name type="scientific">Helicobacter pylori (strain HPAG1)</name>
    <dbReference type="NCBI Taxonomy" id="357544"/>
    <lineage>
        <taxon>Bacteria</taxon>
        <taxon>Pseudomonadati</taxon>
        <taxon>Campylobacterota</taxon>
        <taxon>Epsilonproteobacteria</taxon>
        <taxon>Campylobacterales</taxon>
        <taxon>Helicobacteraceae</taxon>
        <taxon>Helicobacter</taxon>
    </lineage>
</organism>
<feature type="chain" id="PRO_1000048655" description="Chromosomal replication initiator protein DnaA">
    <location>
        <begin position="1"/>
        <end position="455"/>
    </location>
</feature>
<feature type="region of interest" description="Domain I, interacts with DnaA modulators" evidence="1">
    <location>
        <begin position="1"/>
        <end position="75"/>
    </location>
</feature>
<feature type="region of interest" description="Domain II" evidence="1">
    <location>
        <begin position="75"/>
        <end position="106"/>
    </location>
</feature>
<feature type="region of interest" description="Domain III, AAA+ region" evidence="1">
    <location>
        <begin position="107"/>
        <end position="321"/>
    </location>
</feature>
<feature type="region of interest" description="Domain IV, binds dsDNA" evidence="1">
    <location>
        <begin position="322"/>
        <end position="455"/>
    </location>
</feature>
<feature type="binding site" evidence="1">
    <location>
        <position position="151"/>
    </location>
    <ligand>
        <name>ATP</name>
        <dbReference type="ChEBI" id="CHEBI:30616"/>
    </ligand>
</feature>
<feature type="binding site" evidence="1">
    <location>
        <position position="153"/>
    </location>
    <ligand>
        <name>ATP</name>
        <dbReference type="ChEBI" id="CHEBI:30616"/>
    </ligand>
</feature>
<feature type="binding site" evidence="1">
    <location>
        <position position="154"/>
    </location>
    <ligand>
        <name>ATP</name>
        <dbReference type="ChEBI" id="CHEBI:30616"/>
    </ligand>
</feature>
<feature type="binding site" evidence="1">
    <location>
        <position position="155"/>
    </location>
    <ligand>
        <name>ATP</name>
        <dbReference type="ChEBI" id="CHEBI:30616"/>
    </ligand>
</feature>
<evidence type="ECO:0000255" key="1">
    <source>
        <dbReference type="HAMAP-Rule" id="MF_00377"/>
    </source>
</evidence>
<dbReference type="EMBL" id="CP000241">
    <property type="protein sequence ID" value="ABF85454.1"/>
    <property type="molecule type" value="Genomic_DNA"/>
</dbReference>
<dbReference type="RefSeq" id="WP_000380556.1">
    <property type="nucleotide sequence ID" value="NC_008086.1"/>
</dbReference>
<dbReference type="SMR" id="Q1CRG8"/>
<dbReference type="KEGG" id="hpa:HPAG1_1387"/>
<dbReference type="HOGENOM" id="CLU_026910_3_1_7"/>
<dbReference type="GO" id="GO:0005737">
    <property type="term" value="C:cytoplasm"/>
    <property type="evidence" value="ECO:0007669"/>
    <property type="project" value="UniProtKB-SubCell"/>
</dbReference>
<dbReference type="GO" id="GO:0005886">
    <property type="term" value="C:plasma membrane"/>
    <property type="evidence" value="ECO:0007669"/>
    <property type="project" value="TreeGrafter"/>
</dbReference>
<dbReference type="GO" id="GO:0005524">
    <property type="term" value="F:ATP binding"/>
    <property type="evidence" value="ECO:0007669"/>
    <property type="project" value="UniProtKB-UniRule"/>
</dbReference>
<dbReference type="GO" id="GO:0016887">
    <property type="term" value="F:ATP hydrolysis activity"/>
    <property type="evidence" value="ECO:0007669"/>
    <property type="project" value="InterPro"/>
</dbReference>
<dbReference type="GO" id="GO:0003688">
    <property type="term" value="F:DNA replication origin binding"/>
    <property type="evidence" value="ECO:0007669"/>
    <property type="project" value="UniProtKB-UniRule"/>
</dbReference>
<dbReference type="GO" id="GO:0008289">
    <property type="term" value="F:lipid binding"/>
    <property type="evidence" value="ECO:0007669"/>
    <property type="project" value="UniProtKB-KW"/>
</dbReference>
<dbReference type="GO" id="GO:0006270">
    <property type="term" value="P:DNA replication initiation"/>
    <property type="evidence" value="ECO:0007669"/>
    <property type="project" value="UniProtKB-UniRule"/>
</dbReference>
<dbReference type="GO" id="GO:0006275">
    <property type="term" value="P:regulation of DNA replication"/>
    <property type="evidence" value="ECO:0007669"/>
    <property type="project" value="UniProtKB-UniRule"/>
</dbReference>
<dbReference type="CDD" id="cd00009">
    <property type="entry name" value="AAA"/>
    <property type="match status" value="1"/>
</dbReference>
<dbReference type="CDD" id="cd06571">
    <property type="entry name" value="Bac_DnaA_C"/>
    <property type="match status" value="1"/>
</dbReference>
<dbReference type="FunFam" id="1.10.1750.10:FF:000007">
    <property type="entry name" value="Chromosomal replication initiator protein DnaA"/>
    <property type="match status" value="1"/>
</dbReference>
<dbReference type="FunFam" id="3.40.50.300:FF:002820">
    <property type="entry name" value="Chromosomal replication initiator protein DnaA"/>
    <property type="match status" value="1"/>
</dbReference>
<dbReference type="Gene3D" id="1.10.1750.10">
    <property type="match status" value="1"/>
</dbReference>
<dbReference type="Gene3D" id="1.10.8.60">
    <property type="match status" value="1"/>
</dbReference>
<dbReference type="Gene3D" id="3.30.300.180">
    <property type="match status" value="1"/>
</dbReference>
<dbReference type="Gene3D" id="3.40.50.300">
    <property type="entry name" value="P-loop containing nucleotide triphosphate hydrolases"/>
    <property type="match status" value="1"/>
</dbReference>
<dbReference type="HAMAP" id="MF_00377">
    <property type="entry name" value="DnaA_bact"/>
    <property type="match status" value="1"/>
</dbReference>
<dbReference type="InterPro" id="IPR003593">
    <property type="entry name" value="AAA+_ATPase"/>
</dbReference>
<dbReference type="InterPro" id="IPR001957">
    <property type="entry name" value="Chromosome_initiator_DnaA"/>
</dbReference>
<dbReference type="InterPro" id="IPR020591">
    <property type="entry name" value="Chromosome_initiator_DnaA-like"/>
</dbReference>
<dbReference type="InterPro" id="IPR018312">
    <property type="entry name" value="Chromosome_initiator_DnaA_CS"/>
</dbReference>
<dbReference type="InterPro" id="IPR013159">
    <property type="entry name" value="DnaA_C"/>
</dbReference>
<dbReference type="InterPro" id="IPR013317">
    <property type="entry name" value="DnaA_dom"/>
</dbReference>
<dbReference type="InterPro" id="IPR038454">
    <property type="entry name" value="DnaA_N_sf"/>
</dbReference>
<dbReference type="InterPro" id="IPR027417">
    <property type="entry name" value="P-loop_NTPase"/>
</dbReference>
<dbReference type="InterPro" id="IPR010921">
    <property type="entry name" value="Trp_repressor/repl_initiator"/>
</dbReference>
<dbReference type="NCBIfam" id="TIGR00362">
    <property type="entry name" value="DnaA"/>
    <property type="match status" value="1"/>
</dbReference>
<dbReference type="PANTHER" id="PTHR30050">
    <property type="entry name" value="CHROMOSOMAL REPLICATION INITIATOR PROTEIN DNAA"/>
    <property type="match status" value="1"/>
</dbReference>
<dbReference type="PANTHER" id="PTHR30050:SF2">
    <property type="entry name" value="CHROMOSOMAL REPLICATION INITIATOR PROTEIN DNAA"/>
    <property type="match status" value="1"/>
</dbReference>
<dbReference type="Pfam" id="PF00308">
    <property type="entry name" value="Bac_DnaA"/>
    <property type="match status" value="1"/>
</dbReference>
<dbReference type="Pfam" id="PF08299">
    <property type="entry name" value="Bac_DnaA_C"/>
    <property type="match status" value="1"/>
</dbReference>
<dbReference type="PRINTS" id="PR00051">
    <property type="entry name" value="DNAA"/>
</dbReference>
<dbReference type="SMART" id="SM00382">
    <property type="entry name" value="AAA"/>
    <property type="match status" value="1"/>
</dbReference>
<dbReference type="SMART" id="SM00760">
    <property type="entry name" value="Bac_DnaA_C"/>
    <property type="match status" value="1"/>
</dbReference>
<dbReference type="SUPFAM" id="SSF52540">
    <property type="entry name" value="P-loop containing nucleoside triphosphate hydrolases"/>
    <property type="match status" value="1"/>
</dbReference>
<dbReference type="SUPFAM" id="SSF48295">
    <property type="entry name" value="TrpR-like"/>
    <property type="match status" value="1"/>
</dbReference>
<dbReference type="PROSITE" id="PS01008">
    <property type="entry name" value="DNAA"/>
    <property type="match status" value="1"/>
</dbReference>
<proteinExistence type="inferred from homology"/>
<name>DNAA_HELPH</name>
<accession>Q1CRG8</accession>